<reference key="1">
    <citation type="journal article" date="2007" name="ChemBioChem">
        <title>A comparative analysis of the sugar phosphate cyclase superfamily involved in primary and secondary metabolism.</title>
        <authorList>
            <person name="Wu X."/>
            <person name="Flatt P.M."/>
            <person name="Schlorke O."/>
            <person name="Zeeck A."/>
            <person name="Dairi T."/>
            <person name="Mahmud T."/>
        </authorList>
    </citation>
    <scope>NUCLEOTIDE SEQUENCE [GENOMIC DNA]</scope>
    <scope>FUNCTION</scope>
    <scope>CATALYTIC ACTIVITY</scope>
    <scope>COFACTOR</scope>
    <scope>PATHWAY</scope>
    <source>
        <strain>Lu 9419</strain>
    </source>
</reference>
<reference key="2">
    <citation type="journal article" date="2009" name="ChemBioChem">
        <title>Biosynthetic gene cluster of cetoniacytone A, an unusual aminocyclitol from the endosymbiotic Bacterium Actinomyces sp. Lu 9419.</title>
        <authorList>
            <person name="Wu X."/>
            <person name="Flatt P.M."/>
            <person name="Xu H."/>
            <person name="Mahmud T."/>
        </authorList>
    </citation>
    <scope>NUCLEOTIDE SEQUENCE [GENOMIC DNA]</scope>
    <source>
        <strain>Lu 9419</strain>
    </source>
</reference>
<comment type="function">
    <text evidence="3">Catalyzes the cyclization of D-sedoheptulose 7-phosphate to 2-epi-5-epi-valiolone. Involved in cetoniacytone A biosynthesis.</text>
</comment>
<comment type="catalytic activity">
    <reaction evidence="3">
        <text>D-sedoheptulose 7-phosphate = 2-epi-5-epi-valiolone + phosphate</text>
        <dbReference type="Rhea" id="RHEA:44184"/>
        <dbReference type="ChEBI" id="CHEBI:43474"/>
        <dbReference type="ChEBI" id="CHEBI:57483"/>
        <dbReference type="ChEBI" id="CHEBI:84187"/>
        <dbReference type="EC" id="4.2.3.152"/>
    </reaction>
</comment>
<comment type="cofactor">
    <cofactor evidence="3">
        <name>NAD(+)</name>
        <dbReference type="ChEBI" id="CHEBI:57540"/>
    </cofactor>
</comment>
<comment type="cofactor">
    <cofactor evidence="3">
        <name>Co(2+)</name>
        <dbReference type="ChEBI" id="CHEBI:48828"/>
    </cofactor>
</comment>
<comment type="pathway">
    <text evidence="3">Antibiotic biosynthesis.</text>
</comment>
<comment type="similarity">
    <text evidence="5">Belongs to the sugar phosphate cyclases superfamily. EEVS family.</text>
</comment>
<feature type="chain" id="PRO_0000435438" description="2-epi-5-epi-valiolone synthase">
    <location>
        <begin position="1"/>
        <end position="381"/>
    </location>
</feature>
<feature type="active site" evidence="2">
    <location>
        <position position="151"/>
    </location>
</feature>
<feature type="binding site" evidence="1">
    <location>
        <position position="50"/>
    </location>
    <ligand>
        <name>NAD(+)</name>
        <dbReference type="ChEBI" id="CHEBI:57540"/>
    </ligand>
</feature>
<feature type="binding site" evidence="1">
    <location>
        <begin position="81"/>
        <end position="84"/>
    </location>
    <ligand>
        <name>NAD(+)</name>
        <dbReference type="ChEBI" id="CHEBI:57540"/>
    </ligand>
</feature>
<feature type="binding site" evidence="1">
    <location>
        <begin position="114"/>
        <end position="118"/>
    </location>
    <ligand>
        <name>NAD(+)</name>
        <dbReference type="ChEBI" id="CHEBI:57540"/>
    </ligand>
</feature>
<feature type="binding site" evidence="1">
    <location>
        <begin position="138"/>
        <end position="139"/>
    </location>
    <ligand>
        <name>NAD(+)</name>
        <dbReference type="ChEBI" id="CHEBI:57540"/>
    </ligand>
</feature>
<feature type="binding site" evidence="1">
    <location>
        <position position="151"/>
    </location>
    <ligand>
        <name>NAD(+)</name>
        <dbReference type="ChEBI" id="CHEBI:57540"/>
    </ligand>
</feature>
<feature type="binding site" evidence="1">
    <location>
        <position position="160"/>
    </location>
    <ligand>
        <name>NAD(+)</name>
        <dbReference type="ChEBI" id="CHEBI:57540"/>
    </ligand>
</feature>
<feature type="binding site" evidence="1">
    <location>
        <begin position="178"/>
        <end position="181"/>
    </location>
    <ligand>
        <name>NAD(+)</name>
        <dbReference type="ChEBI" id="CHEBI:57540"/>
    </ligand>
</feature>
<feature type="binding site" evidence="1">
    <location>
        <position position="193"/>
    </location>
    <ligand>
        <name>a divalent metal cation</name>
        <dbReference type="ChEBI" id="CHEBI:60240"/>
    </ligand>
</feature>
<feature type="binding site" evidence="1">
    <location>
        <position position="264"/>
    </location>
    <ligand>
        <name>a divalent metal cation</name>
        <dbReference type="ChEBI" id="CHEBI:60240"/>
    </ligand>
</feature>
<feature type="binding site" evidence="1">
    <location>
        <position position="280"/>
    </location>
    <ligand>
        <name>a divalent metal cation</name>
        <dbReference type="ChEBI" id="CHEBI:60240"/>
    </ligand>
</feature>
<protein>
    <recommendedName>
        <fullName evidence="4">2-epi-5-epi-valiolone synthase</fullName>
        <shortName evidence="5">EEVS</shortName>
        <ecNumber evidence="3">4.2.3.152</ecNumber>
    </recommendedName>
</protein>
<accession>A1YPR2</accession>
<sequence length="381" mass="41960">MANQWQAQAEQTITYEVQMTDGVLDPSNRALLDAGATVRTDQPRRFIVIDANVHEIYGDALRKYLAHHNCEYRLCVLSASEEAKTMESVFTVVDGLDSFGISRRHEPIIAIGGGIVLDIAGLAASMYRRSTPYVRVPTSLIGLVDAGVGIKTGVNFGSHKNRLGTYFAPTAALLDRGFLDTVDDRHISNGLAEILKIALVKDAELFRLMEEHAELLLAERLTGRTPTGDVVAREVFSRAVGGMLEELEPNLWEQELERLVDYGHSFSPTLEMRALPALLHGEAVTVDMALTTVLAEARGLVSTSDRERIFQVMRRLRLPVWHPLLEAGLLEHALRETTRHRDGLQRMPIPVGIGGARFLHDLTVAELTGAAESLRELGGGE</sequence>
<gene>
    <name evidence="4" type="primary">cetA</name>
</gene>
<name>CETA_ACTSX</name>
<evidence type="ECO:0000250" key="1">
    <source>
        <dbReference type="UniProtKB" id="H2K887"/>
    </source>
</evidence>
<evidence type="ECO:0000250" key="2">
    <source>
        <dbReference type="UniProtKB" id="Q9S5E2"/>
    </source>
</evidence>
<evidence type="ECO:0000269" key="3">
    <source>
    </source>
</evidence>
<evidence type="ECO:0000303" key="4">
    <source>
    </source>
</evidence>
<evidence type="ECO:0000305" key="5"/>
<proteinExistence type="evidence at protein level"/>
<organism>
    <name type="scientific">Actinomyces sp</name>
    <dbReference type="NCBI Taxonomy" id="29317"/>
    <lineage>
        <taxon>Bacteria</taxon>
        <taxon>Bacillati</taxon>
        <taxon>Actinomycetota</taxon>
        <taxon>Actinomycetes</taxon>
        <taxon>Actinomycetales</taxon>
        <taxon>Actinomycetaceae</taxon>
        <taxon>Actinomyces</taxon>
    </lineage>
</organism>
<dbReference type="EC" id="4.2.3.152" evidence="3"/>
<dbReference type="EMBL" id="EF120454">
    <property type="protein sequence ID" value="ABL74381.1"/>
    <property type="molecule type" value="Genomic_DNA"/>
</dbReference>
<dbReference type="SMR" id="A1YPR2"/>
<dbReference type="KEGG" id="ag:ABL74381"/>
<dbReference type="BRENDA" id="4.2.3.152">
    <property type="organism ID" value="136"/>
</dbReference>
<dbReference type="GO" id="GO:0003856">
    <property type="term" value="F:3-dehydroquinate synthase activity"/>
    <property type="evidence" value="ECO:0007669"/>
    <property type="project" value="TreeGrafter"/>
</dbReference>
<dbReference type="GO" id="GO:0046872">
    <property type="term" value="F:metal ion binding"/>
    <property type="evidence" value="ECO:0007669"/>
    <property type="project" value="UniProtKB-KW"/>
</dbReference>
<dbReference type="GO" id="GO:0000166">
    <property type="term" value="F:nucleotide binding"/>
    <property type="evidence" value="ECO:0007669"/>
    <property type="project" value="UniProtKB-KW"/>
</dbReference>
<dbReference type="GO" id="GO:0017000">
    <property type="term" value="P:antibiotic biosynthetic process"/>
    <property type="evidence" value="ECO:0007669"/>
    <property type="project" value="UniProtKB-KW"/>
</dbReference>
<dbReference type="CDD" id="cd08199">
    <property type="entry name" value="EEVS"/>
    <property type="match status" value="1"/>
</dbReference>
<dbReference type="Gene3D" id="3.40.50.1970">
    <property type="match status" value="1"/>
</dbReference>
<dbReference type="Gene3D" id="1.20.1090.10">
    <property type="entry name" value="Dehydroquinate synthase-like - alpha domain"/>
    <property type="match status" value="1"/>
</dbReference>
<dbReference type="InterPro" id="IPR050071">
    <property type="entry name" value="Dehydroquinate_synthase"/>
</dbReference>
<dbReference type="InterPro" id="IPR030960">
    <property type="entry name" value="DHQS/DOIS_N"/>
</dbReference>
<dbReference type="InterPro" id="IPR056179">
    <property type="entry name" value="DHQS_C"/>
</dbReference>
<dbReference type="InterPro" id="IPR035872">
    <property type="entry name" value="EEVS-like"/>
</dbReference>
<dbReference type="PANTHER" id="PTHR43622:SF3">
    <property type="entry name" value="2-EPI-5-EPI-VALIOLONE SYNTHASE"/>
    <property type="match status" value="1"/>
</dbReference>
<dbReference type="PANTHER" id="PTHR43622">
    <property type="entry name" value="3-DEHYDROQUINATE SYNTHASE"/>
    <property type="match status" value="1"/>
</dbReference>
<dbReference type="Pfam" id="PF01761">
    <property type="entry name" value="DHQ_synthase"/>
    <property type="match status" value="1"/>
</dbReference>
<dbReference type="Pfam" id="PF24621">
    <property type="entry name" value="DHQS_C"/>
    <property type="match status" value="1"/>
</dbReference>
<dbReference type="SUPFAM" id="SSF56796">
    <property type="entry name" value="Dehydroquinate synthase-like"/>
    <property type="match status" value="1"/>
</dbReference>
<keyword id="KW-0045">Antibiotic biosynthesis</keyword>
<keyword id="KW-0170">Cobalt</keyword>
<keyword id="KW-0456">Lyase</keyword>
<keyword id="KW-0479">Metal-binding</keyword>
<keyword id="KW-0520">NAD</keyword>
<keyword id="KW-0547">Nucleotide-binding</keyword>